<dbReference type="EMBL" id="CP000473">
    <property type="protein sequence ID" value="ABJ81474.1"/>
    <property type="molecule type" value="Genomic_DNA"/>
</dbReference>
<dbReference type="SMR" id="Q02BU2"/>
<dbReference type="FunCoup" id="Q02BU2">
    <property type="interactions" value="503"/>
</dbReference>
<dbReference type="STRING" id="234267.Acid_0464"/>
<dbReference type="KEGG" id="sus:Acid_0464"/>
<dbReference type="eggNOG" id="COG0224">
    <property type="taxonomic scope" value="Bacteria"/>
</dbReference>
<dbReference type="HOGENOM" id="CLU_050669_0_1_0"/>
<dbReference type="InParanoid" id="Q02BU2"/>
<dbReference type="OrthoDB" id="9812769at2"/>
<dbReference type="GO" id="GO:0005886">
    <property type="term" value="C:plasma membrane"/>
    <property type="evidence" value="ECO:0007669"/>
    <property type="project" value="UniProtKB-SubCell"/>
</dbReference>
<dbReference type="GO" id="GO:0045259">
    <property type="term" value="C:proton-transporting ATP synthase complex"/>
    <property type="evidence" value="ECO:0007669"/>
    <property type="project" value="UniProtKB-KW"/>
</dbReference>
<dbReference type="GO" id="GO:0005524">
    <property type="term" value="F:ATP binding"/>
    <property type="evidence" value="ECO:0007669"/>
    <property type="project" value="UniProtKB-UniRule"/>
</dbReference>
<dbReference type="GO" id="GO:0046933">
    <property type="term" value="F:proton-transporting ATP synthase activity, rotational mechanism"/>
    <property type="evidence" value="ECO:0007669"/>
    <property type="project" value="UniProtKB-UniRule"/>
</dbReference>
<dbReference type="GO" id="GO:0042777">
    <property type="term" value="P:proton motive force-driven plasma membrane ATP synthesis"/>
    <property type="evidence" value="ECO:0007669"/>
    <property type="project" value="UniProtKB-UniRule"/>
</dbReference>
<dbReference type="CDD" id="cd12151">
    <property type="entry name" value="F1-ATPase_gamma"/>
    <property type="match status" value="1"/>
</dbReference>
<dbReference type="FunFam" id="1.10.287.80:FF:000003">
    <property type="entry name" value="ATP synthase gamma chain, chloroplastic"/>
    <property type="match status" value="1"/>
</dbReference>
<dbReference type="Gene3D" id="3.40.1380.10">
    <property type="match status" value="1"/>
</dbReference>
<dbReference type="Gene3D" id="1.10.287.80">
    <property type="entry name" value="ATP synthase, gamma subunit, helix hairpin domain"/>
    <property type="match status" value="1"/>
</dbReference>
<dbReference type="HAMAP" id="MF_00815">
    <property type="entry name" value="ATP_synth_gamma_bact"/>
    <property type="match status" value="1"/>
</dbReference>
<dbReference type="InterPro" id="IPR035968">
    <property type="entry name" value="ATP_synth_F1_ATPase_gsu"/>
</dbReference>
<dbReference type="InterPro" id="IPR000131">
    <property type="entry name" value="ATP_synth_F1_gsu"/>
</dbReference>
<dbReference type="InterPro" id="IPR023632">
    <property type="entry name" value="ATP_synth_F1_gsu_CS"/>
</dbReference>
<dbReference type="NCBIfam" id="TIGR01146">
    <property type="entry name" value="ATPsyn_F1gamma"/>
    <property type="match status" value="1"/>
</dbReference>
<dbReference type="PANTHER" id="PTHR11693">
    <property type="entry name" value="ATP SYNTHASE GAMMA CHAIN"/>
    <property type="match status" value="1"/>
</dbReference>
<dbReference type="PANTHER" id="PTHR11693:SF22">
    <property type="entry name" value="ATP SYNTHASE SUBUNIT GAMMA, MITOCHONDRIAL"/>
    <property type="match status" value="1"/>
</dbReference>
<dbReference type="Pfam" id="PF00231">
    <property type="entry name" value="ATP-synt"/>
    <property type="match status" value="1"/>
</dbReference>
<dbReference type="PRINTS" id="PR00126">
    <property type="entry name" value="ATPASEGAMMA"/>
</dbReference>
<dbReference type="SUPFAM" id="SSF52943">
    <property type="entry name" value="ATP synthase (F1-ATPase), gamma subunit"/>
    <property type="match status" value="1"/>
</dbReference>
<dbReference type="PROSITE" id="PS00153">
    <property type="entry name" value="ATPASE_GAMMA"/>
    <property type="match status" value="1"/>
</dbReference>
<comment type="function">
    <text evidence="1">Produces ATP from ADP in the presence of a proton gradient across the membrane. The gamma chain is believed to be important in regulating ATPase activity and the flow of protons through the CF(0) complex.</text>
</comment>
<comment type="subunit">
    <text evidence="1">F-type ATPases have 2 components, CF(1) - the catalytic core - and CF(0) - the membrane proton channel. CF(1) has five subunits: alpha(3), beta(3), gamma(1), delta(1), epsilon(1). CF(0) has three main subunits: a, b and c.</text>
</comment>
<comment type="subcellular location">
    <subcellularLocation>
        <location evidence="1">Cell inner membrane</location>
        <topology evidence="1">Peripheral membrane protein</topology>
    </subcellularLocation>
</comment>
<comment type="similarity">
    <text evidence="1">Belongs to the ATPase gamma chain family.</text>
</comment>
<evidence type="ECO:0000255" key="1">
    <source>
        <dbReference type="HAMAP-Rule" id="MF_00815"/>
    </source>
</evidence>
<feature type="chain" id="PRO_1000053342" description="ATP synthase gamma chain">
    <location>
        <begin position="1"/>
        <end position="286"/>
    </location>
</feature>
<keyword id="KW-0066">ATP synthesis</keyword>
<keyword id="KW-0997">Cell inner membrane</keyword>
<keyword id="KW-1003">Cell membrane</keyword>
<keyword id="KW-0139">CF(1)</keyword>
<keyword id="KW-0375">Hydrogen ion transport</keyword>
<keyword id="KW-0406">Ion transport</keyword>
<keyword id="KW-0472">Membrane</keyword>
<keyword id="KW-0813">Transport</keyword>
<reference key="1">
    <citation type="journal article" date="2009" name="Appl. Environ. Microbiol.">
        <title>Three genomes from the phylum Acidobacteria provide insight into the lifestyles of these microorganisms in soils.</title>
        <authorList>
            <person name="Ward N.L."/>
            <person name="Challacombe J.F."/>
            <person name="Janssen P.H."/>
            <person name="Henrissat B."/>
            <person name="Coutinho P.M."/>
            <person name="Wu M."/>
            <person name="Xie G."/>
            <person name="Haft D.H."/>
            <person name="Sait M."/>
            <person name="Badger J."/>
            <person name="Barabote R.D."/>
            <person name="Bradley B."/>
            <person name="Brettin T.S."/>
            <person name="Brinkac L.M."/>
            <person name="Bruce D."/>
            <person name="Creasy T."/>
            <person name="Daugherty S.C."/>
            <person name="Davidsen T.M."/>
            <person name="DeBoy R.T."/>
            <person name="Detter J.C."/>
            <person name="Dodson R.J."/>
            <person name="Durkin A.S."/>
            <person name="Ganapathy A."/>
            <person name="Gwinn-Giglio M."/>
            <person name="Han C.S."/>
            <person name="Khouri H."/>
            <person name="Kiss H."/>
            <person name="Kothari S.P."/>
            <person name="Madupu R."/>
            <person name="Nelson K.E."/>
            <person name="Nelson W.C."/>
            <person name="Paulsen I."/>
            <person name="Penn K."/>
            <person name="Ren Q."/>
            <person name="Rosovitz M.J."/>
            <person name="Selengut J.D."/>
            <person name="Shrivastava S."/>
            <person name="Sullivan S.A."/>
            <person name="Tapia R."/>
            <person name="Thompson L.S."/>
            <person name="Watkins K.L."/>
            <person name="Yang Q."/>
            <person name="Yu C."/>
            <person name="Zafar N."/>
            <person name="Zhou L."/>
            <person name="Kuske C.R."/>
        </authorList>
    </citation>
    <scope>NUCLEOTIDE SEQUENCE [LARGE SCALE GENOMIC DNA]</scope>
    <source>
        <strain>Ellin6076</strain>
    </source>
</reference>
<proteinExistence type="inferred from homology"/>
<organism>
    <name type="scientific">Solibacter usitatus (strain Ellin6076)</name>
    <dbReference type="NCBI Taxonomy" id="234267"/>
    <lineage>
        <taxon>Bacteria</taxon>
        <taxon>Pseudomonadati</taxon>
        <taxon>Acidobacteriota</taxon>
        <taxon>Terriglobia</taxon>
        <taxon>Bryobacterales</taxon>
        <taxon>Solibacteraceae</taxon>
        <taxon>Candidatus Solibacter</taxon>
    </lineage>
</organism>
<gene>
    <name evidence="1" type="primary">atpG</name>
    <name type="ordered locus">Acid_0464</name>
</gene>
<accession>Q02BU2</accession>
<sequence length="286" mass="31761">MPSLIDIRRRIRSVKNTQQITKAMKMVSAAKLRRAQDRTIAARPYGTLLRKVLGNVAAAVANDESAAENPLLARREERRILLVVITGDKGLAGAFNTNLIKAASRFVAEHSGEQITFELIGRKGRDYFRKREVAVSGEAIGLAAKVKYEDTAAIARRAMELFRNQEIDAVYLVYNEFKSVVSQKLTLSRVLPAELPEQANPVDYIFEEPPADMLNILLPKYVEMEFYRALLESAASEHAARMTAMDSATSNAAEMIDKLTLYMNRVRQASITKEIIEVVSGAAAAE</sequence>
<protein>
    <recommendedName>
        <fullName evidence="1">ATP synthase gamma chain</fullName>
    </recommendedName>
    <alternativeName>
        <fullName evidence="1">ATP synthase F1 sector gamma subunit</fullName>
    </alternativeName>
    <alternativeName>
        <fullName evidence="1">F-ATPase gamma subunit</fullName>
    </alternativeName>
</protein>
<name>ATPG_SOLUE</name>